<organism>
    <name type="scientific">Shigella flexneri</name>
    <dbReference type="NCBI Taxonomy" id="623"/>
    <lineage>
        <taxon>Bacteria</taxon>
        <taxon>Pseudomonadati</taxon>
        <taxon>Pseudomonadota</taxon>
        <taxon>Gammaproteobacteria</taxon>
        <taxon>Enterobacterales</taxon>
        <taxon>Enterobacteriaceae</taxon>
        <taxon>Shigella</taxon>
    </lineage>
</organism>
<proteinExistence type="inferred from homology"/>
<accession>Q83K22</accession>
<accession>Q7C0E0</accession>
<dbReference type="EMBL" id="AE005674">
    <property type="protein sequence ID" value="AAN44136.1"/>
    <property type="molecule type" value="Genomic_DNA"/>
</dbReference>
<dbReference type="EMBL" id="AE014073">
    <property type="protein sequence ID" value="AAP17960.1"/>
    <property type="molecule type" value="Genomic_DNA"/>
</dbReference>
<dbReference type="RefSeq" id="WP_000187873.1">
    <property type="nucleotide sequence ID" value="NZ_WPGW01000044.1"/>
</dbReference>
<dbReference type="STRING" id="198214.SF2640"/>
<dbReference type="PaxDb" id="198214-SF2640"/>
<dbReference type="KEGG" id="sfl:SF2640"/>
<dbReference type="KEGG" id="sfx:S2813"/>
<dbReference type="PATRIC" id="fig|198214.7.peg.3150"/>
<dbReference type="HOGENOM" id="CLU_079569_1_2_6"/>
<dbReference type="Proteomes" id="UP000001006">
    <property type="component" value="Chromosome"/>
</dbReference>
<dbReference type="Proteomes" id="UP000002673">
    <property type="component" value="Chromosome"/>
</dbReference>
<dbReference type="GO" id="GO:0005886">
    <property type="term" value="C:plasma membrane"/>
    <property type="evidence" value="ECO:0007669"/>
    <property type="project" value="UniProtKB-SubCell"/>
</dbReference>
<dbReference type="GO" id="GO:0015171">
    <property type="term" value="F:amino acid transmembrane transporter activity"/>
    <property type="evidence" value="ECO:0007669"/>
    <property type="project" value="TreeGrafter"/>
</dbReference>
<dbReference type="GO" id="GO:0033228">
    <property type="term" value="P:cysteine export across plasma membrane"/>
    <property type="evidence" value="ECO:0007669"/>
    <property type="project" value="TreeGrafter"/>
</dbReference>
<dbReference type="InterPro" id="IPR001123">
    <property type="entry name" value="LeuE-type"/>
</dbReference>
<dbReference type="NCBIfam" id="NF007653">
    <property type="entry name" value="PRK10323.1"/>
    <property type="match status" value="1"/>
</dbReference>
<dbReference type="PANTHER" id="PTHR30086">
    <property type="entry name" value="ARGININE EXPORTER PROTEIN ARGO"/>
    <property type="match status" value="1"/>
</dbReference>
<dbReference type="PANTHER" id="PTHR30086:SF20">
    <property type="entry name" value="ARGININE EXPORTER PROTEIN ARGO-RELATED"/>
    <property type="match status" value="1"/>
</dbReference>
<dbReference type="Pfam" id="PF01810">
    <property type="entry name" value="LysE"/>
    <property type="match status" value="1"/>
</dbReference>
<reference key="1">
    <citation type="journal article" date="2002" name="Nucleic Acids Res.">
        <title>Genome sequence of Shigella flexneri 2a: insights into pathogenicity through comparison with genomes of Escherichia coli K12 and O157.</title>
        <authorList>
            <person name="Jin Q."/>
            <person name="Yuan Z."/>
            <person name="Xu J."/>
            <person name="Wang Y."/>
            <person name="Shen Y."/>
            <person name="Lu W."/>
            <person name="Wang J."/>
            <person name="Liu H."/>
            <person name="Yang J."/>
            <person name="Yang F."/>
            <person name="Zhang X."/>
            <person name="Zhang J."/>
            <person name="Yang G."/>
            <person name="Wu H."/>
            <person name="Qu D."/>
            <person name="Dong J."/>
            <person name="Sun L."/>
            <person name="Xue Y."/>
            <person name="Zhao A."/>
            <person name="Gao Y."/>
            <person name="Zhu J."/>
            <person name="Kan B."/>
            <person name="Ding K."/>
            <person name="Chen S."/>
            <person name="Cheng H."/>
            <person name="Yao Z."/>
            <person name="He B."/>
            <person name="Chen R."/>
            <person name="Ma D."/>
            <person name="Qiang B."/>
            <person name="Wen Y."/>
            <person name="Hou Y."/>
            <person name="Yu J."/>
        </authorList>
    </citation>
    <scope>NUCLEOTIDE SEQUENCE [LARGE SCALE GENOMIC DNA]</scope>
    <source>
        <strain>301 / Serotype 2a</strain>
    </source>
</reference>
<reference key="2">
    <citation type="journal article" date="2003" name="Infect. Immun.">
        <title>Complete genome sequence and comparative genomics of Shigella flexneri serotype 2a strain 2457T.</title>
        <authorList>
            <person name="Wei J."/>
            <person name="Goldberg M.B."/>
            <person name="Burland V."/>
            <person name="Venkatesan M.M."/>
            <person name="Deng W."/>
            <person name="Fournier G."/>
            <person name="Mayhew G.F."/>
            <person name="Plunkett G. III"/>
            <person name="Rose D.J."/>
            <person name="Darling A."/>
            <person name="Mau B."/>
            <person name="Perna N.T."/>
            <person name="Payne S.M."/>
            <person name="Runyen-Janecky L.J."/>
            <person name="Zhou S."/>
            <person name="Schwartz D.C."/>
            <person name="Blattner F.R."/>
        </authorList>
    </citation>
    <scope>NUCLEOTIDE SEQUENCE [LARGE SCALE GENOMIC DNA]</scope>
    <source>
        <strain>ATCC 700930 / 2457T / Serotype 2a</strain>
    </source>
</reference>
<evidence type="ECO:0000250" key="1">
    <source>
        <dbReference type="UniProtKB" id="P38101"/>
    </source>
</evidence>
<evidence type="ECO:0000255" key="2"/>
<evidence type="ECO:0000305" key="3"/>
<feature type="chain" id="PRO_0000318733" description="Cysteine/O-acetylserine efflux protein">
    <location>
        <begin position="1"/>
        <end position="195"/>
    </location>
</feature>
<feature type="topological domain" description="Periplasmic" evidence="2">
    <location>
        <begin position="1"/>
        <end position="9"/>
    </location>
</feature>
<feature type="transmembrane region" description="Helical" evidence="2">
    <location>
        <begin position="10"/>
        <end position="32"/>
    </location>
</feature>
<feature type="topological domain" description="Cytoplasmic" evidence="2">
    <location>
        <begin position="33"/>
        <end position="46"/>
    </location>
</feature>
<feature type="transmembrane region" description="Helical" evidence="2">
    <location>
        <begin position="47"/>
        <end position="67"/>
    </location>
</feature>
<feature type="topological domain" description="Periplasmic" evidence="2">
    <location>
        <begin position="68"/>
        <end position="69"/>
    </location>
</feature>
<feature type="transmembrane region" description="Helical" evidence="2">
    <location>
        <begin position="70"/>
        <end position="90"/>
    </location>
</feature>
<feature type="topological domain" description="Cytoplasmic" evidence="2">
    <location>
        <begin position="91"/>
        <end position="104"/>
    </location>
</feature>
<feature type="transmembrane region" description="Helical" evidence="2">
    <location>
        <begin position="105"/>
        <end position="125"/>
    </location>
</feature>
<feature type="topological domain" description="Periplasmic" evidence="2">
    <location>
        <begin position="126"/>
        <end position="141"/>
    </location>
</feature>
<feature type="transmembrane region" description="Helical" evidence="2">
    <location>
        <begin position="142"/>
        <end position="162"/>
    </location>
</feature>
<feature type="topological domain" description="Cytoplasmic" evidence="2">
    <location>
        <begin position="163"/>
        <end position="176"/>
    </location>
</feature>
<feature type="transmembrane region" description="Helical" evidence="2">
    <location>
        <begin position="177"/>
        <end position="194"/>
    </location>
</feature>
<feature type="topological domain" description="Periplasmic" evidence="1">
    <location>
        <position position="195"/>
    </location>
</feature>
<gene>
    <name type="primary">eamB</name>
    <name type="ordered locus">SF2640</name>
    <name type="ordered locus">S2813</name>
</gene>
<name>EAMB_SHIFL</name>
<keyword id="KW-0029">Amino-acid transport</keyword>
<keyword id="KW-0997">Cell inner membrane</keyword>
<keyword id="KW-1003">Cell membrane</keyword>
<keyword id="KW-0472">Membrane</keyword>
<keyword id="KW-1185">Reference proteome</keyword>
<keyword id="KW-0812">Transmembrane</keyword>
<keyword id="KW-1133">Transmembrane helix</keyword>
<keyword id="KW-0813">Transport</keyword>
<sequence>MTPILLSAFWTYTLITAMTPGPNNILALSSATSHGFRQSTRVLAGMSLGFLIVMLLCAGISFSLAVIDPAAVHLLSWAGAAYIVWLAWKIATSPTKEDGLQAKPISFWASFALQFVNVKIILYGVTALSTFVLPQTQALSWVVGVSVLLAMIGTFGNVCWALAGHLFQRLFRQYGRQLNIVLALLLVYCAVRIFY</sequence>
<comment type="function">
    <text evidence="1">Exporter of O-acetylserine (OAS) and cysteine.</text>
</comment>
<comment type="catalytic activity">
    <reaction evidence="1">
        <text>O-acetyl-L-serine(in) = O-acetyl-L-serine(out)</text>
        <dbReference type="Rhea" id="RHEA:29659"/>
        <dbReference type="ChEBI" id="CHEBI:58340"/>
    </reaction>
    <physiologicalReaction direction="left-to-right" evidence="1">
        <dbReference type="Rhea" id="RHEA:29660"/>
    </physiologicalReaction>
</comment>
<comment type="catalytic activity">
    <reaction evidence="1">
        <text>L-cysteine(in) = L-cysteine(out)</text>
        <dbReference type="Rhea" id="RHEA:29655"/>
        <dbReference type="ChEBI" id="CHEBI:35235"/>
    </reaction>
    <physiologicalReaction direction="left-to-right" evidence="1">
        <dbReference type="Rhea" id="RHEA:29656"/>
    </physiologicalReaction>
</comment>
<comment type="subcellular location">
    <subcellularLocation>
        <location evidence="1">Cell inner membrane</location>
        <topology evidence="2">Multi-pass membrane protein</topology>
    </subcellularLocation>
</comment>
<comment type="similarity">
    <text evidence="3">Belongs to the Rht family.</text>
</comment>
<protein>
    <recommendedName>
        <fullName evidence="1">Cysteine/O-acetylserine efflux protein</fullName>
    </recommendedName>
</protein>